<proteinExistence type="evidence at protein level"/>
<feature type="chain" id="PRO_0000337748" description="Probable UDP-sugar transporter protein SLC35A4">
    <location>
        <begin position="1"/>
        <end position="324"/>
    </location>
</feature>
<feature type="topological domain" description="Cytoplasmic" evidence="8">
    <location>
        <begin position="1"/>
        <end position="18"/>
    </location>
</feature>
<feature type="transmembrane region" description="Helical" evidence="1">
    <location>
        <begin position="19"/>
        <end position="39"/>
    </location>
</feature>
<feature type="topological domain" description="Lumenal" evidence="8">
    <location>
        <begin position="40"/>
        <end position="52"/>
    </location>
</feature>
<feature type="transmembrane region" description="Helical" evidence="1">
    <location>
        <begin position="53"/>
        <end position="73"/>
    </location>
</feature>
<feature type="topological domain" description="Cytoplasmic" evidence="8">
    <location>
        <begin position="74"/>
        <end position="85"/>
    </location>
</feature>
<feature type="transmembrane region" description="Helical" evidence="1">
    <location>
        <begin position="86"/>
        <end position="106"/>
    </location>
</feature>
<feature type="topological domain" description="Lumenal" evidence="8">
    <location>
        <begin position="107"/>
        <end position="142"/>
    </location>
</feature>
<feature type="transmembrane region" description="Helical" evidence="1">
    <location>
        <begin position="143"/>
        <end position="163"/>
    </location>
</feature>
<feature type="topological domain" description="Cytoplasmic" evidence="8">
    <location>
        <begin position="164"/>
        <end position="180"/>
    </location>
</feature>
<feature type="transmembrane region" description="Helical" evidence="1">
    <location>
        <begin position="181"/>
        <end position="201"/>
    </location>
</feature>
<feature type="topological domain" description="Lumenal" evidence="8">
    <location>
        <begin position="202"/>
        <end position="214"/>
    </location>
</feature>
<feature type="transmembrane region" description="Helical" evidence="1">
    <location>
        <begin position="215"/>
        <end position="235"/>
    </location>
</feature>
<feature type="topological domain" description="Cytoplasmic" evidence="8">
    <location>
        <begin position="236"/>
        <end position="250"/>
    </location>
</feature>
<feature type="transmembrane region" description="Helical" evidence="1">
    <location>
        <begin position="251"/>
        <end position="271"/>
    </location>
</feature>
<feature type="topological domain" description="Lumenal" evidence="8">
    <location>
        <begin position="272"/>
        <end position="275"/>
    </location>
</feature>
<feature type="transmembrane region" description="Helical" evidence="1">
    <location>
        <begin position="276"/>
        <end position="298"/>
    </location>
</feature>
<feature type="topological domain" description="Cytoplasmic" evidence="8">
    <location>
        <begin position="299"/>
        <end position="324"/>
    </location>
</feature>
<feature type="sequence conflict" description="In Ref. 1; BAF82067." evidence="7" ref="1">
    <original>G</original>
    <variation>E</variation>
    <location>
        <position position="79"/>
    </location>
</feature>
<feature type="sequence conflict" description="In Ref. 1; BAF82067." evidence="7" ref="1">
    <original>P</original>
    <variation>L</variation>
    <location>
        <position position="81"/>
    </location>
</feature>
<feature type="sequence conflict" description="In Ref. 1; BAF82067." evidence="7" ref="1">
    <original>F</original>
    <variation>L</variation>
    <location>
        <position position="306"/>
    </location>
</feature>
<keyword id="KW-0024">Alternative initiation</keyword>
<keyword id="KW-0333">Golgi apparatus</keyword>
<keyword id="KW-0472">Membrane</keyword>
<keyword id="KW-1185">Reference proteome</keyword>
<keyword id="KW-0762">Sugar transport</keyword>
<keyword id="KW-0812">Transmembrane</keyword>
<keyword id="KW-1133">Transmembrane helix</keyword>
<keyword id="KW-0813">Transport</keyword>
<name>S35A4_HUMAN</name>
<reference key="1">
    <citation type="journal article" date="2004" name="Nat. Genet.">
        <title>Complete sequencing and characterization of 21,243 full-length human cDNAs.</title>
        <authorList>
            <person name="Ota T."/>
            <person name="Suzuki Y."/>
            <person name="Nishikawa T."/>
            <person name="Otsuki T."/>
            <person name="Sugiyama T."/>
            <person name="Irie R."/>
            <person name="Wakamatsu A."/>
            <person name="Hayashi K."/>
            <person name="Sato H."/>
            <person name="Nagai K."/>
            <person name="Kimura K."/>
            <person name="Makita H."/>
            <person name="Sekine M."/>
            <person name="Obayashi M."/>
            <person name="Nishi T."/>
            <person name="Shibahara T."/>
            <person name="Tanaka T."/>
            <person name="Ishii S."/>
            <person name="Yamamoto J."/>
            <person name="Saito K."/>
            <person name="Kawai Y."/>
            <person name="Isono Y."/>
            <person name="Nakamura Y."/>
            <person name="Nagahari K."/>
            <person name="Murakami K."/>
            <person name="Yasuda T."/>
            <person name="Iwayanagi T."/>
            <person name="Wagatsuma M."/>
            <person name="Shiratori A."/>
            <person name="Sudo H."/>
            <person name="Hosoiri T."/>
            <person name="Kaku Y."/>
            <person name="Kodaira H."/>
            <person name="Kondo H."/>
            <person name="Sugawara M."/>
            <person name="Takahashi M."/>
            <person name="Kanda K."/>
            <person name="Yokoi T."/>
            <person name="Furuya T."/>
            <person name="Kikkawa E."/>
            <person name="Omura Y."/>
            <person name="Abe K."/>
            <person name="Kamihara K."/>
            <person name="Katsuta N."/>
            <person name="Sato K."/>
            <person name="Tanikawa M."/>
            <person name="Yamazaki M."/>
            <person name="Ninomiya K."/>
            <person name="Ishibashi T."/>
            <person name="Yamashita H."/>
            <person name="Murakawa K."/>
            <person name="Fujimori K."/>
            <person name="Tanai H."/>
            <person name="Kimata M."/>
            <person name="Watanabe M."/>
            <person name="Hiraoka S."/>
            <person name="Chiba Y."/>
            <person name="Ishida S."/>
            <person name="Ono Y."/>
            <person name="Takiguchi S."/>
            <person name="Watanabe S."/>
            <person name="Yosida M."/>
            <person name="Hotuta T."/>
            <person name="Kusano J."/>
            <person name="Kanehori K."/>
            <person name="Takahashi-Fujii A."/>
            <person name="Hara H."/>
            <person name="Tanase T.-O."/>
            <person name="Nomura Y."/>
            <person name="Togiya S."/>
            <person name="Komai F."/>
            <person name="Hara R."/>
            <person name="Takeuchi K."/>
            <person name="Arita M."/>
            <person name="Imose N."/>
            <person name="Musashino K."/>
            <person name="Yuuki H."/>
            <person name="Oshima A."/>
            <person name="Sasaki N."/>
            <person name="Aotsuka S."/>
            <person name="Yoshikawa Y."/>
            <person name="Matsunawa H."/>
            <person name="Ichihara T."/>
            <person name="Shiohata N."/>
            <person name="Sano S."/>
            <person name="Moriya S."/>
            <person name="Momiyama H."/>
            <person name="Satoh N."/>
            <person name="Takami S."/>
            <person name="Terashima Y."/>
            <person name="Suzuki O."/>
            <person name="Nakagawa S."/>
            <person name="Senoh A."/>
            <person name="Mizoguchi H."/>
            <person name="Goto Y."/>
            <person name="Shimizu F."/>
            <person name="Wakebe H."/>
            <person name="Hishigaki H."/>
            <person name="Watanabe T."/>
            <person name="Sugiyama A."/>
            <person name="Takemoto M."/>
            <person name="Kawakami B."/>
            <person name="Yamazaki M."/>
            <person name="Watanabe K."/>
            <person name="Kumagai A."/>
            <person name="Itakura S."/>
            <person name="Fukuzumi Y."/>
            <person name="Fujimori Y."/>
            <person name="Komiyama M."/>
            <person name="Tashiro H."/>
            <person name="Tanigami A."/>
            <person name="Fujiwara T."/>
            <person name="Ono T."/>
            <person name="Yamada K."/>
            <person name="Fujii Y."/>
            <person name="Ozaki K."/>
            <person name="Hirao M."/>
            <person name="Ohmori Y."/>
            <person name="Kawabata A."/>
            <person name="Hikiji T."/>
            <person name="Kobatake N."/>
            <person name="Inagaki H."/>
            <person name="Ikema Y."/>
            <person name="Okamoto S."/>
            <person name="Okitani R."/>
            <person name="Kawakami T."/>
            <person name="Noguchi S."/>
            <person name="Itoh T."/>
            <person name="Shigeta K."/>
            <person name="Senba T."/>
            <person name="Matsumura K."/>
            <person name="Nakajima Y."/>
            <person name="Mizuno T."/>
            <person name="Morinaga M."/>
            <person name="Sasaki M."/>
            <person name="Togashi T."/>
            <person name="Oyama M."/>
            <person name="Hata H."/>
            <person name="Watanabe M."/>
            <person name="Komatsu T."/>
            <person name="Mizushima-Sugano J."/>
            <person name="Satoh T."/>
            <person name="Shirai Y."/>
            <person name="Takahashi Y."/>
            <person name="Nakagawa K."/>
            <person name="Okumura K."/>
            <person name="Nagase T."/>
            <person name="Nomura N."/>
            <person name="Kikuchi H."/>
            <person name="Masuho Y."/>
            <person name="Yamashita R."/>
            <person name="Nakai K."/>
            <person name="Yada T."/>
            <person name="Nakamura Y."/>
            <person name="Ohara O."/>
            <person name="Isogai T."/>
            <person name="Sugano S."/>
        </authorList>
    </citation>
    <scope>NUCLEOTIDE SEQUENCE [LARGE SCALE MRNA]</scope>
    <source>
        <tissue>Adrenal gland</tissue>
    </source>
</reference>
<reference key="2">
    <citation type="journal article" date="2007" name="BMC Genomics">
        <title>The full-ORF clone resource of the German cDNA consortium.</title>
        <authorList>
            <person name="Bechtel S."/>
            <person name="Rosenfelder H."/>
            <person name="Duda A."/>
            <person name="Schmidt C.P."/>
            <person name="Ernst U."/>
            <person name="Wellenreuther R."/>
            <person name="Mehrle A."/>
            <person name="Schuster C."/>
            <person name="Bahr A."/>
            <person name="Bloecker H."/>
            <person name="Heubner D."/>
            <person name="Hoerlein A."/>
            <person name="Michel G."/>
            <person name="Wedler H."/>
            <person name="Koehrer K."/>
            <person name="Ottenwaelder B."/>
            <person name="Poustka A."/>
            <person name="Wiemann S."/>
            <person name="Schupp I."/>
        </authorList>
    </citation>
    <scope>NUCLEOTIDE SEQUENCE [LARGE SCALE MRNA]</scope>
    <source>
        <tissue>Uterus</tissue>
    </source>
</reference>
<reference key="3">
    <citation type="submission" date="2005-09" db="EMBL/GenBank/DDBJ databases">
        <authorList>
            <person name="Mural R.J."/>
            <person name="Istrail S."/>
            <person name="Sutton G.G."/>
            <person name="Florea L."/>
            <person name="Halpern A.L."/>
            <person name="Mobarry C.M."/>
            <person name="Lippert R."/>
            <person name="Walenz B."/>
            <person name="Shatkay H."/>
            <person name="Dew I."/>
            <person name="Miller J.R."/>
            <person name="Flanigan M.J."/>
            <person name="Edwards N.J."/>
            <person name="Bolanos R."/>
            <person name="Fasulo D."/>
            <person name="Halldorsson B.V."/>
            <person name="Hannenhalli S."/>
            <person name="Turner R."/>
            <person name="Yooseph S."/>
            <person name="Lu F."/>
            <person name="Nusskern D.R."/>
            <person name="Shue B.C."/>
            <person name="Zheng X.H."/>
            <person name="Zhong F."/>
            <person name="Delcher A.L."/>
            <person name="Huson D.H."/>
            <person name="Kravitz S.A."/>
            <person name="Mouchard L."/>
            <person name="Reinert K."/>
            <person name="Remington K.A."/>
            <person name="Clark A.G."/>
            <person name="Waterman M.S."/>
            <person name="Eichler E.E."/>
            <person name="Adams M.D."/>
            <person name="Hunkapiller M.W."/>
            <person name="Myers E.W."/>
            <person name="Venter J.C."/>
        </authorList>
    </citation>
    <scope>NUCLEOTIDE SEQUENCE [LARGE SCALE GENOMIC DNA]</scope>
</reference>
<reference key="4">
    <citation type="journal article" date="2004" name="Genome Res.">
        <title>The status, quality, and expansion of the NIH full-length cDNA project: the Mammalian Gene Collection (MGC).</title>
        <authorList>
            <consortium name="The MGC Project Team"/>
        </authorList>
    </citation>
    <scope>NUCLEOTIDE SEQUENCE [LARGE SCALE MRNA]</scope>
    <source>
        <tissue>Muscle</tissue>
    </source>
</reference>
<reference key="5">
    <citation type="journal article" date="2015" name="Elife">
        <title>Translation of 5' leaders is pervasive in genes resistant to eIF2 repression.</title>
        <authorList>
            <person name="Andreev D.E."/>
            <person name="O'Connor P.B."/>
            <person name="Fahey C."/>
            <person name="Kenny E.M."/>
            <person name="Terenin I.M."/>
            <person name="Dmitriev S.E."/>
            <person name="Cormican P."/>
            <person name="Morris D.W."/>
            <person name="Shatsky I.N."/>
            <person name="Baranov P.V."/>
        </authorList>
    </citation>
    <scope>ALTERNATIVE INITIATION (ISOFORM 2)</scope>
</reference>
<reference key="6">
    <citation type="journal article" date="2017" name="Biochim. Biophys. Acta">
        <title>An insight into the orphan nucleotide sugar transporter SLC35A4.</title>
        <authorList>
            <person name="Sosicka P."/>
            <person name="Maszczak-Seneczko D."/>
            <person name="Bazan B."/>
            <person name="Shauchuk Y."/>
            <person name="Kaczmarek B."/>
            <person name="Olczak M."/>
        </authorList>
    </citation>
    <scope>FUNCTION</scope>
    <scope>SUBCELLULAR LOCATION</scope>
    <scope>TOPOLOGY</scope>
    <scope>IDENTIFICATION IN A COMPLEX WITH SLC35A2 AND SLC35A3</scope>
</reference>
<reference key="7">
    <citation type="journal article" date="2021" name="J. Biol. Chem.">
        <title>The promiscuous binding pocket of SLC35A1 ensures redundant transport of CDP-ribitol to the Golgi.</title>
        <authorList>
            <person name="Ury B."/>
            <person name="Potelle S."/>
            <person name="Caligiore F."/>
            <person name="Whorton M.R."/>
            <person name="Bommer G.T."/>
        </authorList>
    </citation>
    <scope>FUNCTION</scope>
    <scope>TRANSPORTER ACTIVITY</scope>
</reference>
<reference key="8">
    <citation type="journal article" date="2024" name="J. Mol. Biol.">
        <title>An Inner Mitochondrial Membrane Microprotein from the SLC35A4 Upstream ORF Regulates Cellular Metabolism.</title>
        <authorList>
            <person name="Rocha A.L."/>
            <person name="Pai V."/>
            <person name="Perkins G."/>
            <person name="Chang T."/>
            <person name="Ma J."/>
            <person name="De Souza E.V."/>
            <person name="Chu Q."/>
            <person name="Vaughan J.M."/>
            <person name="Diedrich J.K."/>
            <person name="Ellisman M.H."/>
            <person name="Saghatelian A."/>
        </authorList>
    </citation>
    <scope>SUBCELLULAR LOCATION</scope>
</reference>
<protein>
    <recommendedName>
        <fullName evidence="7">Probable UDP-sugar transporter protein SLC35A4</fullName>
    </recommendedName>
    <alternativeName>
        <fullName evidence="9">Solute carrier family 35 member A4</fullName>
    </alternativeName>
</protein>
<accession>Q96G79</accession>
<accession>A8K013</accession>
<evidence type="ECO:0000255" key="1"/>
<evidence type="ECO:0000269" key="2">
    <source>
    </source>
</evidence>
<evidence type="ECO:0000269" key="3">
    <source>
    </source>
</evidence>
<evidence type="ECO:0000269" key="4">
    <source>
    </source>
</evidence>
<evidence type="ECO:0000269" key="5">
    <source>
    </source>
</evidence>
<evidence type="ECO:0000303" key="6">
    <source>
    </source>
</evidence>
<evidence type="ECO:0000305" key="7"/>
<evidence type="ECO:0000305" key="8">
    <source>
    </source>
</evidence>
<evidence type="ECO:0000312" key="9">
    <source>
        <dbReference type="HGNC" id="HGNC:20753"/>
    </source>
</evidence>
<comment type="function">
    <text evidence="3 4">Mediates the transport of CDP-ribitol (PubMed:34015330). Does not exhibit CMP-sialic acid, UDP-galactose and UDP-N-acetylglucosamine transport activity (PubMed:28167211, PubMed:34015330).</text>
</comment>
<comment type="catalytic activity">
    <reaction evidence="4">
        <text>CDP-L-ribitol(in) + CDP(out) = CDP-L-ribitol(out) + CDP(in)</text>
        <dbReference type="Rhea" id="RHEA:71579"/>
        <dbReference type="ChEBI" id="CHEBI:57608"/>
        <dbReference type="ChEBI" id="CHEBI:58069"/>
    </reaction>
</comment>
<comment type="subunit">
    <text evidence="3">Found in a complex with SLC35A2 and SLC35A3.</text>
</comment>
<comment type="interaction">
    <interactant intactId="EBI-12363689">
        <id>Q96G79</id>
    </interactant>
    <interactant intactId="EBI-700794">
        <id>Q13323</id>
        <label>BIK</label>
    </interactant>
    <organismsDiffer>false</organismsDiffer>
    <experiments>3</experiments>
</comment>
<comment type="interaction">
    <interactant intactId="EBI-12363689">
        <id>Q96G79</id>
    </interactant>
    <interactant intactId="EBI-372265">
        <id>P21964</id>
        <label>COMT</label>
    </interactant>
    <organismsDiffer>false</organismsDiffer>
    <experiments>3</experiments>
</comment>
<comment type="interaction">
    <interactant intactId="EBI-12363689">
        <id>Q96G79</id>
    </interactant>
    <interactant intactId="EBI-18013275">
        <id>Q7Z7G2</id>
        <label>CPLX4</label>
    </interactant>
    <organismsDiffer>false</organismsDiffer>
    <experiments>3</experiments>
</comment>
<comment type="interaction">
    <interactant intactId="EBI-12363689">
        <id>Q96G79</id>
    </interactant>
    <interactant intactId="EBI-6942903">
        <id>Q96BA8</id>
        <label>CREB3L1</label>
    </interactant>
    <organismsDiffer>false</organismsDiffer>
    <experiments>3</experiments>
</comment>
<comment type="interaction">
    <interactant intactId="EBI-12363689">
        <id>Q96G79</id>
    </interactant>
    <interactant intactId="EBI-1046040">
        <id>P00387</id>
        <label>CYB5R3</label>
    </interactant>
    <organismsDiffer>false</organismsDiffer>
    <experiments>3</experiments>
</comment>
<comment type="interaction">
    <interactant intactId="EBI-12363689">
        <id>Q96G79</id>
    </interactant>
    <interactant intactId="EBI-8787095">
        <id>O00559</id>
        <label>EBAG9</label>
    </interactant>
    <organismsDiffer>false</organismsDiffer>
    <experiments>3</experiments>
</comment>
<comment type="interaction">
    <interactant intactId="EBI-12363689">
        <id>Q96G79</id>
    </interactant>
    <interactant intactId="EBI-3915253">
        <id>Q15125</id>
        <label>EBP</label>
    </interactant>
    <organismsDiffer>false</organismsDiffer>
    <experiments>3</experiments>
</comment>
<comment type="interaction">
    <interactant intactId="EBI-12363689">
        <id>Q96G79</id>
    </interactant>
    <interactant intactId="EBI-781551">
        <id>Q9Y282</id>
        <label>ERGIC3</label>
    </interactant>
    <organismsDiffer>false</organismsDiffer>
    <experiments>3</experiments>
</comment>
<comment type="interaction">
    <interactant intactId="EBI-12363689">
        <id>Q96G79</id>
    </interactant>
    <interactant intactId="EBI-18304435">
        <id>Q5JX71</id>
        <label>FAM209A</label>
    </interactant>
    <organismsDiffer>false</organismsDiffer>
    <experiments>3</experiments>
</comment>
<comment type="interaction">
    <interactant intactId="EBI-12363689">
        <id>Q96G79</id>
    </interactant>
    <interactant intactId="EBI-6911547">
        <id>A2A2Y4</id>
        <label>FRMD3</label>
    </interactant>
    <organismsDiffer>false</organismsDiffer>
    <experiments>3</experiments>
</comment>
<comment type="interaction">
    <interactant intactId="EBI-12363689">
        <id>Q96G79</id>
    </interactant>
    <interactant intactId="EBI-1058791">
        <id>Q9UJ14</id>
        <label>GGT7</label>
    </interactant>
    <organismsDiffer>false</organismsDiffer>
    <experiments>3</experiments>
</comment>
<comment type="interaction">
    <interactant intactId="EBI-12363689">
        <id>Q96G79</id>
    </interactant>
    <interactant intactId="EBI-17458373">
        <id>P48165</id>
        <label>GJA8</label>
    </interactant>
    <organismsDiffer>false</organismsDiffer>
    <experiments>3</experiments>
</comment>
<comment type="interaction">
    <interactant intactId="EBI-12363689">
        <id>Q96G79</id>
    </interactant>
    <interactant intactId="EBI-13345167">
        <id>Q8TDT2</id>
        <label>GPR152</label>
    </interactant>
    <organismsDiffer>false</organismsDiffer>
    <experiments>3</experiments>
</comment>
<comment type="interaction">
    <interactant intactId="EBI-12363689">
        <id>Q96G79</id>
    </interactant>
    <interactant intactId="EBI-2868124">
        <id>Q9BSE4</id>
        <label>HERPUD2</label>
    </interactant>
    <organismsDiffer>false</organismsDiffer>
    <experiments>3</experiments>
</comment>
<comment type="interaction">
    <interactant intactId="EBI-12363689">
        <id>Q96G79</id>
    </interactant>
    <interactant intactId="EBI-17247926">
        <id>Q9NY72</id>
        <label>SCN3B</label>
    </interactant>
    <organismsDiffer>false</organismsDiffer>
    <experiments>3</experiments>
</comment>
<comment type="interaction">
    <interactant intactId="EBI-12363689">
        <id>Q96G79</id>
    </interactant>
    <interactant intactId="EBI-17456472">
        <id>Q96EP9</id>
        <label>SLC10A4</label>
    </interactant>
    <organismsDiffer>false</organismsDiffer>
    <experiments>3</experiments>
</comment>
<comment type="interaction">
    <interactant intactId="EBI-12363689">
        <id>Q96G79</id>
    </interactant>
    <interactant intactId="EBI-12808018">
        <id>Q9UKG4</id>
        <label>SLC13A4</label>
    </interactant>
    <organismsDiffer>false</organismsDiffer>
    <experiments>3</experiments>
</comment>
<comment type="interaction">
    <interactant intactId="EBI-12363689">
        <id>Q96G79</id>
    </interactant>
    <interactant intactId="EBI-17280858">
        <id>Q8WWF3</id>
        <label>SSMEM1</label>
    </interactant>
    <organismsDiffer>false</organismsDiffer>
    <experiments>3</experiments>
</comment>
<comment type="interaction">
    <interactant intactId="EBI-12363689">
        <id>Q96G79</id>
    </interactant>
    <interactant intactId="EBI-8032987">
        <id>Q8N9I0</id>
        <label>SYT2</label>
    </interactant>
    <organismsDiffer>false</organismsDiffer>
    <experiments>3</experiments>
</comment>
<comment type="interaction">
    <interactant intactId="EBI-12363689">
        <id>Q96G79</id>
    </interactant>
    <interactant intactId="EBI-8638294">
        <id>Q9NUH8</id>
        <label>TMEM14B</label>
    </interactant>
    <organismsDiffer>false</organismsDiffer>
    <experiments>3</experiments>
</comment>
<comment type="interaction">
    <interactant intactId="EBI-12363689">
        <id>Q96G79</id>
    </interactant>
    <interactant intactId="EBI-13329239">
        <id>Q6P9G4</id>
        <label>TMEM154</label>
    </interactant>
    <organismsDiffer>false</organismsDiffer>
    <experiments>3</experiments>
</comment>
<comment type="interaction">
    <interactant intactId="EBI-12363689">
        <id>Q96G79</id>
    </interactant>
    <interactant intactId="EBI-10982110">
        <id>Q96Q45-2</id>
        <label>TMEM237</label>
    </interactant>
    <organismsDiffer>false</organismsDiffer>
    <experiments>5</experiments>
</comment>
<comment type="interaction">
    <interactant intactId="EBI-12363689">
        <id>Q96G79</id>
    </interactant>
    <interactant intactId="EBI-18178701">
        <id>Q4KMG9</id>
        <label>TMEM52B</label>
    </interactant>
    <organismsDiffer>false</organismsDiffer>
    <experiments>3</experiments>
</comment>
<comment type="interaction">
    <interactant intactId="EBI-12363689">
        <id>Q96G79</id>
    </interactant>
    <interactant intactId="EBI-751253">
        <id>Q9BSR8</id>
        <label>YIPF4</label>
    </interactant>
    <organismsDiffer>false</organismsDiffer>
    <experiments>3</experiments>
</comment>
<comment type="subcellular location">
    <subcellularLocation>
        <location evidence="3 5">Golgi apparatus membrane</location>
        <topology evidence="1">Multi-pass membrane protein</topology>
    </subcellularLocation>
</comment>
<comment type="alternative products">
    <event type="alternative initiation"/>
    <isoform>
        <id>Q96G79-1</id>
        <name>1</name>
        <sequence type="displayed"/>
    </isoform>
    <isoform>
        <id>L0R6Q1-1</id>
        <name>2</name>
        <name evidence="6">uORF</name>
        <sequence type="external"/>
    </isoform>
</comment>
<comment type="similarity">
    <text evidence="7">Belongs to the nucleotide-sugar transporter family. SLC35A subfamily.</text>
</comment>
<comment type="caution">
    <text evidence="2">The translation and the expression of this protein may be maintained under stress conditions thanks to the presence of the upstream ORF in transcripts.</text>
</comment>
<gene>
    <name evidence="9" type="primary">SLC35A4</name>
</gene>
<sequence>MSVEDGGMPGLGRPRQARWTLMLLLSTAMYGAHAPLLALCHVDGRVPFRPSSAVLLTELTKLLLCAFSLLVGWQAWPQGPPPWRQAAPFALSALLYGANNNLVIYLQRYMDPSTYQVLSNLKIGSTAVLYCLCLRHRLSVRQGLALLLLMAAGACYAAGGLQVPGNTLPSPPPAAAASPMPLHITPLGLLLLILYCLISGLSSVYTELLMKRQRLPLALQNLFLYTFGVLLNLGLHAGGGSGPGLLEGFSGWAALVVLSQALNGLLMSAVMKHGSSITRLFVVSCSLVVNAVLSAVLLRLQLTAAFFLATLLIGLAMRLYYGSR</sequence>
<dbReference type="EMBL" id="AK289378">
    <property type="protein sequence ID" value="BAF82067.1"/>
    <property type="molecule type" value="mRNA"/>
</dbReference>
<dbReference type="EMBL" id="AL833972">
    <property type="protein sequence ID" value="CAD38817.1"/>
    <property type="molecule type" value="mRNA"/>
</dbReference>
<dbReference type="EMBL" id="CH471062">
    <property type="protein sequence ID" value="EAW62040.1"/>
    <property type="molecule type" value="Genomic_DNA"/>
</dbReference>
<dbReference type="EMBL" id="BC009906">
    <property type="protein sequence ID" value="AAH09906.1"/>
    <property type="molecule type" value="mRNA"/>
</dbReference>
<dbReference type="CCDS" id="CCDS4231.1">
    <molecule id="Q96G79-1"/>
</dbReference>
<dbReference type="RefSeq" id="NP_542401.1">
    <molecule id="Q96G79-1"/>
    <property type="nucleotide sequence ID" value="NM_080670.4"/>
</dbReference>
<dbReference type="SMR" id="Q96G79"/>
<dbReference type="BioGRID" id="125263">
    <property type="interactions" value="33"/>
</dbReference>
<dbReference type="FunCoup" id="Q96G79">
    <property type="interactions" value="522"/>
</dbReference>
<dbReference type="IntAct" id="Q96G79">
    <property type="interactions" value="26"/>
</dbReference>
<dbReference type="MINT" id="Q96G79"/>
<dbReference type="STRING" id="9606.ENSP00000424566"/>
<dbReference type="TCDB" id="2.A.7.12.12">
    <property type="family name" value="the drug/metabolite transporter (dmt) superfamily"/>
</dbReference>
<dbReference type="GlyGen" id="Q96G79">
    <property type="glycosylation" value="1 site, 1 O-linked glycan (1 site)"/>
</dbReference>
<dbReference type="iPTMnet" id="Q96G79"/>
<dbReference type="PhosphoSitePlus" id="Q96G79"/>
<dbReference type="SwissPalm" id="Q96G79"/>
<dbReference type="BioMuta" id="SLC35A4"/>
<dbReference type="DMDM" id="74731793"/>
<dbReference type="PaxDb" id="9606-ENSP00000424566"/>
<dbReference type="PeptideAtlas" id="Q96G79"/>
<dbReference type="Antibodypedia" id="45451">
    <property type="antibodies" value="23 antibodies from 13 providers"/>
</dbReference>
<dbReference type="DNASU" id="113829"/>
<dbReference type="Ensembl" id="ENST00000323146.8">
    <molecule id="Q96G79-1"/>
    <property type="protein sequence ID" value="ENSP00000327133.3"/>
    <property type="gene ID" value="ENSG00000176087.17"/>
</dbReference>
<dbReference type="Ensembl" id="ENST00000514199.1">
    <molecule id="Q96G79-1"/>
    <property type="protein sequence ID" value="ENSP00000424566.1"/>
    <property type="gene ID" value="ENSG00000176087.17"/>
</dbReference>
<dbReference type="Ensembl" id="ENST00000612662.2">
    <molecule id="Q96G79-1"/>
    <property type="protein sequence ID" value="ENSP00000479255.1"/>
    <property type="gene ID" value="ENSG00000176087.17"/>
</dbReference>
<dbReference type="GeneID" id="113829"/>
<dbReference type="KEGG" id="hsa:113829"/>
<dbReference type="MANE-Select" id="ENST00000323146.8">
    <property type="protein sequence ID" value="ENSP00000327133.3"/>
    <property type="RefSeq nucleotide sequence ID" value="NM_080670.4"/>
    <property type="RefSeq protein sequence ID" value="NP_542401.1"/>
</dbReference>
<dbReference type="UCSC" id="uc003lgg.1">
    <molecule id="Q96G79-1"/>
    <property type="organism name" value="human"/>
</dbReference>
<dbReference type="AGR" id="HGNC:20753"/>
<dbReference type="CTD" id="113829"/>
<dbReference type="DisGeNET" id="113829"/>
<dbReference type="GeneCards" id="SLC35A4"/>
<dbReference type="HGNC" id="HGNC:20753">
    <property type="gene designation" value="SLC35A4"/>
</dbReference>
<dbReference type="HPA" id="ENSG00000176087">
    <property type="expression patterns" value="Low tissue specificity"/>
</dbReference>
<dbReference type="MIM" id="620297">
    <property type="type" value="gene"/>
</dbReference>
<dbReference type="neXtProt" id="NX_Q96G79"/>
<dbReference type="OpenTargets" id="ENSG00000176087"/>
<dbReference type="PharmGKB" id="PA134971555"/>
<dbReference type="VEuPathDB" id="HostDB:ENSG00000176087"/>
<dbReference type="eggNOG" id="KOG2234">
    <property type="taxonomic scope" value="Eukaryota"/>
</dbReference>
<dbReference type="GeneTree" id="ENSGT00950000182827"/>
<dbReference type="HOGENOM" id="CLU_024645_5_1_1"/>
<dbReference type="InParanoid" id="Q96G79"/>
<dbReference type="OMA" id="SSCVVMI"/>
<dbReference type="OrthoDB" id="419167at2759"/>
<dbReference type="PAN-GO" id="Q96G79">
    <property type="GO annotations" value="1 GO annotation based on evolutionary models"/>
</dbReference>
<dbReference type="PhylomeDB" id="Q96G79"/>
<dbReference type="TreeFam" id="TF315345"/>
<dbReference type="PathwayCommons" id="Q96G79"/>
<dbReference type="SignaLink" id="Q96G79"/>
<dbReference type="BioGRID-ORCS" id="113829">
    <property type="hits" value="11 hits in 1152 CRISPR screens"/>
</dbReference>
<dbReference type="ChiTaRS" id="SLC35A4">
    <property type="organism name" value="human"/>
</dbReference>
<dbReference type="GenomeRNAi" id="113829"/>
<dbReference type="Pharos" id="Q96G79">
    <property type="development level" value="Tdark"/>
</dbReference>
<dbReference type="Proteomes" id="UP000005640">
    <property type="component" value="Chromosome 5"/>
</dbReference>
<dbReference type="RNAct" id="Q96G79">
    <property type="molecule type" value="protein"/>
</dbReference>
<dbReference type="Bgee" id="ENSG00000176087">
    <property type="expression patterns" value="Expressed in islet of Langerhans and 180 other cell types or tissues"/>
</dbReference>
<dbReference type="ExpressionAtlas" id="Q96G79">
    <property type="expression patterns" value="baseline and differential"/>
</dbReference>
<dbReference type="GO" id="GO:0005794">
    <property type="term" value="C:Golgi apparatus"/>
    <property type="evidence" value="ECO:0000250"/>
    <property type="project" value="UniProtKB"/>
</dbReference>
<dbReference type="GO" id="GO:0000139">
    <property type="term" value="C:Golgi membrane"/>
    <property type="evidence" value="ECO:0000314"/>
    <property type="project" value="UniProtKB"/>
</dbReference>
<dbReference type="GO" id="GO:0015165">
    <property type="term" value="F:pyrimidine nucleotide-sugar transmembrane transporter activity"/>
    <property type="evidence" value="ECO:0007669"/>
    <property type="project" value="InterPro"/>
</dbReference>
<dbReference type="GO" id="GO:0022857">
    <property type="term" value="F:transmembrane transporter activity"/>
    <property type="evidence" value="ECO:0000318"/>
    <property type="project" value="GO_Central"/>
</dbReference>
<dbReference type="GO" id="GO:0055085">
    <property type="term" value="P:transmembrane transport"/>
    <property type="evidence" value="ECO:0000318"/>
    <property type="project" value="GO_Central"/>
</dbReference>
<dbReference type="InterPro" id="IPR007271">
    <property type="entry name" value="Nuc_sug_transpt"/>
</dbReference>
<dbReference type="PANTHER" id="PTHR10231">
    <property type="entry name" value="NUCLEOTIDE-SUGAR TRANSMEMBRANE TRANSPORTER"/>
    <property type="match status" value="1"/>
</dbReference>
<dbReference type="Pfam" id="PF04142">
    <property type="entry name" value="Nuc_sug_transp"/>
    <property type="match status" value="1"/>
</dbReference>
<dbReference type="PIRSF" id="PIRSF005799">
    <property type="entry name" value="UDP-gal_transpt"/>
    <property type="match status" value="1"/>
</dbReference>
<dbReference type="SUPFAM" id="SSF103481">
    <property type="entry name" value="Multidrug resistance efflux transporter EmrE"/>
    <property type="match status" value="1"/>
</dbReference>
<organism>
    <name type="scientific">Homo sapiens</name>
    <name type="common">Human</name>
    <dbReference type="NCBI Taxonomy" id="9606"/>
    <lineage>
        <taxon>Eukaryota</taxon>
        <taxon>Metazoa</taxon>
        <taxon>Chordata</taxon>
        <taxon>Craniata</taxon>
        <taxon>Vertebrata</taxon>
        <taxon>Euteleostomi</taxon>
        <taxon>Mammalia</taxon>
        <taxon>Eutheria</taxon>
        <taxon>Euarchontoglires</taxon>
        <taxon>Primates</taxon>
        <taxon>Haplorrhini</taxon>
        <taxon>Catarrhini</taxon>
        <taxon>Hominidae</taxon>
        <taxon>Homo</taxon>
    </lineage>
</organism>